<sequence>MKRPALILICLLLQACSATTKELGNSLWDSLFGTPGVQLTDDDIQNMPYASQYMQLNGGPQLFVVLAFAEDGQQKWVTQDQATLVTQHGRLVKTLLGGDNLIEVNNLAADPLIKPAQIVDGASWTRTMGWTEYQQVRYATARSVFKWDGTDTVKVGSDETPVRVLDEEVSTDQARWHNRYWIDSEGQIRQSEQYLGADYFPVKTTLIKAAKQ</sequence>
<name>YJBF_ECOLI</name>
<keyword id="KW-1003">Cell membrane</keyword>
<keyword id="KW-0449">Lipoprotein</keyword>
<keyword id="KW-0472">Membrane</keyword>
<keyword id="KW-0564">Palmitate</keyword>
<keyword id="KW-1185">Reference proteome</keyword>
<keyword id="KW-0732">Signal</keyword>
<dbReference type="EMBL" id="U00006">
    <property type="protein sequence ID" value="AAC43121.1"/>
    <property type="status" value="ALT_INIT"/>
    <property type="molecule type" value="Genomic_DNA"/>
</dbReference>
<dbReference type="EMBL" id="U00096">
    <property type="protein sequence ID" value="AAC76997.2"/>
    <property type="molecule type" value="Genomic_DNA"/>
</dbReference>
<dbReference type="EMBL" id="AP009048">
    <property type="protein sequence ID" value="BAE78029.1"/>
    <property type="molecule type" value="Genomic_DNA"/>
</dbReference>
<dbReference type="PIR" id="B65210">
    <property type="entry name" value="B65210"/>
</dbReference>
<dbReference type="RefSeq" id="NP_418451.4">
    <property type="nucleotide sequence ID" value="NC_000913.3"/>
</dbReference>
<dbReference type="RefSeq" id="WP_001295278.1">
    <property type="nucleotide sequence ID" value="NZ_SSZK01000049.1"/>
</dbReference>
<dbReference type="SMR" id="P32687"/>
<dbReference type="BioGRID" id="4261456">
    <property type="interactions" value="252"/>
</dbReference>
<dbReference type="FunCoup" id="P32687">
    <property type="interactions" value="5"/>
</dbReference>
<dbReference type="STRING" id="511145.b4027"/>
<dbReference type="PaxDb" id="511145-b4027"/>
<dbReference type="EnsemblBacteria" id="AAC76997">
    <property type="protein sequence ID" value="AAC76997"/>
    <property type="gene ID" value="b4027"/>
</dbReference>
<dbReference type="GeneID" id="948533"/>
<dbReference type="KEGG" id="ecj:JW5711"/>
<dbReference type="KEGG" id="eco:b4027"/>
<dbReference type="KEGG" id="ecoc:C3026_21750"/>
<dbReference type="PATRIC" id="fig|511145.12.peg.4140"/>
<dbReference type="EchoBASE" id="EB1868"/>
<dbReference type="eggNOG" id="ENOG502ZAMG">
    <property type="taxonomic scope" value="Bacteria"/>
</dbReference>
<dbReference type="HOGENOM" id="CLU_098990_1_0_6"/>
<dbReference type="InParanoid" id="P32687"/>
<dbReference type="OMA" id="TTKGLGN"/>
<dbReference type="OrthoDB" id="5591889at2"/>
<dbReference type="PhylomeDB" id="P32687"/>
<dbReference type="BioCyc" id="EcoCyc:EG11924-MONOMER"/>
<dbReference type="PRO" id="PR:P32687"/>
<dbReference type="Proteomes" id="UP000000625">
    <property type="component" value="Chromosome"/>
</dbReference>
<dbReference type="GO" id="GO:0005886">
    <property type="term" value="C:plasma membrane"/>
    <property type="evidence" value="ECO:0007669"/>
    <property type="project" value="UniProtKB-SubCell"/>
</dbReference>
<dbReference type="FunFam" id="2.40.360.10:FF:000001">
    <property type="entry name" value="YjbF family lipoprotein"/>
    <property type="match status" value="1"/>
</dbReference>
<dbReference type="Gene3D" id="2.40.360.10">
    <property type="entry name" value="YmcC-like"/>
    <property type="match status" value="1"/>
</dbReference>
<dbReference type="InterPro" id="IPR021308">
    <property type="entry name" value="GfcB"/>
</dbReference>
<dbReference type="InterPro" id="IPR023373">
    <property type="entry name" value="YmcC_sf"/>
</dbReference>
<dbReference type="Pfam" id="PF11102">
    <property type="entry name" value="YjbF"/>
    <property type="match status" value="1"/>
</dbReference>
<dbReference type="SUPFAM" id="SSF159270">
    <property type="entry name" value="YmcC-like"/>
    <property type="match status" value="1"/>
</dbReference>
<dbReference type="PROSITE" id="PS51257">
    <property type="entry name" value="PROKAR_LIPOPROTEIN"/>
    <property type="match status" value="1"/>
</dbReference>
<organism>
    <name type="scientific">Escherichia coli (strain K12)</name>
    <dbReference type="NCBI Taxonomy" id="83333"/>
    <lineage>
        <taxon>Bacteria</taxon>
        <taxon>Pseudomonadati</taxon>
        <taxon>Pseudomonadota</taxon>
        <taxon>Gammaproteobacteria</taxon>
        <taxon>Enterobacterales</taxon>
        <taxon>Enterobacteriaceae</taxon>
        <taxon>Escherichia</taxon>
    </lineage>
</organism>
<reference key="1">
    <citation type="journal article" date="1993" name="Nucleic Acids Res.">
        <title>Analysis of the Escherichia coli genome. IV. DNA sequence of the region from 89.2 to 92.8 minutes.</title>
        <authorList>
            <person name="Blattner F.R."/>
            <person name="Burland V.D."/>
            <person name="Plunkett G. III"/>
            <person name="Sofia H.J."/>
            <person name="Daniels D.L."/>
        </authorList>
    </citation>
    <scope>NUCLEOTIDE SEQUENCE [LARGE SCALE GENOMIC DNA]</scope>
    <source>
        <strain>K12 / MG1655 / ATCC 47076</strain>
    </source>
</reference>
<reference key="2">
    <citation type="journal article" date="1997" name="Science">
        <title>The complete genome sequence of Escherichia coli K-12.</title>
        <authorList>
            <person name="Blattner F.R."/>
            <person name="Plunkett G. III"/>
            <person name="Bloch C.A."/>
            <person name="Perna N.T."/>
            <person name="Burland V."/>
            <person name="Riley M."/>
            <person name="Collado-Vides J."/>
            <person name="Glasner J.D."/>
            <person name="Rode C.K."/>
            <person name="Mayhew G.F."/>
            <person name="Gregor J."/>
            <person name="Davis N.W."/>
            <person name="Kirkpatrick H.A."/>
            <person name="Goeden M.A."/>
            <person name="Rose D.J."/>
            <person name="Mau B."/>
            <person name="Shao Y."/>
        </authorList>
    </citation>
    <scope>NUCLEOTIDE SEQUENCE [LARGE SCALE GENOMIC DNA]</scope>
    <source>
        <strain>K12 / MG1655 / ATCC 47076</strain>
    </source>
</reference>
<reference key="3">
    <citation type="journal article" date="2006" name="Mol. Syst. Biol.">
        <title>Highly accurate genome sequences of Escherichia coli K-12 strains MG1655 and W3110.</title>
        <authorList>
            <person name="Hayashi K."/>
            <person name="Morooka N."/>
            <person name="Yamamoto Y."/>
            <person name="Fujita K."/>
            <person name="Isono K."/>
            <person name="Choi S."/>
            <person name="Ohtsubo E."/>
            <person name="Baba T."/>
            <person name="Wanner B.L."/>
            <person name="Mori H."/>
            <person name="Horiuchi T."/>
        </authorList>
    </citation>
    <scope>NUCLEOTIDE SEQUENCE [LARGE SCALE GENOMIC DNA]</scope>
    <source>
        <strain>K12 / W3110 / ATCC 27325 / DSM 5911</strain>
    </source>
</reference>
<feature type="signal peptide" evidence="1">
    <location>
        <begin position="1"/>
        <end position="15"/>
    </location>
</feature>
<feature type="chain" id="PRO_0000018054" description="Uncharacterized lipoprotein YjbF">
    <location>
        <begin position="16"/>
        <end position="212"/>
    </location>
</feature>
<feature type="lipid moiety-binding region" description="N-palmitoyl cysteine" evidence="1">
    <location>
        <position position="16"/>
    </location>
</feature>
<feature type="lipid moiety-binding region" description="S-diacylglycerol cysteine" evidence="1">
    <location>
        <position position="16"/>
    </location>
</feature>
<gene>
    <name type="primary">yjbF</name>
    <name type="ordered locus">b4027</name>
    <name type="ordered locus">JW5711</name>
</gene>
<accession>P32687</accession>
<accession>Q2M6S7</accession>
<evidence type="ECO:0000255" key="1">
    <source>
        <dbReference type="PROSITE-ProRule" id="PRU00303"/>
    </source>
</evidence>
<evidence type="ECO:0000305" key="2"/>
<protein>
    <recommendedName>
        <fullName>Uncharacterized lipoprotein YjbF</fullName>
    </recommendedName>
</protein>
<proteinExistence type="inferred from homology"/>
<comment type="subcellular location">
    <subcellularLocation>
        <location evidence="1">Cell membrane</location>
        <topology evidence="1">Lipid-anchor</topology>
    </subcellularLocation>
</comment>
<comment type="similarity">
    <text evidence="2">To E.coli YmcC.</text>
</comment>
<comment type="sequence caution" evidence="2">
    <conflict type="erroneous initiation">
        <sequence resource="EMBL-CDS" id="AAC43121"/>
    </conflict>
    <text>Extended N-terminus.</text>
</comment>